<sequence>MAQFQIECVESNTEESRNHYSKFILEPLERGQGTTVGNALRRVLLSNLEGTAVTAVRIAGVSHEFATVPGVREDVLEIIMRMKEVILKSYSSQAQIGRLLVNGPTTITASHFDLPSEVEVIDPTQYVATIAEGGKLEMEFRIERGKGYRTVERGREEATSLDFLQIDSIFMPVRKVNYSVEEVRADGSIPKDRLLLEVWTNGSISPQEALSSAAGILVDLFNPLKDISLEPTDTNSDIPDDPTAQIPIEELQLSVRAYNCLKRAQVNSVADLLDYTQEDLLEIKNFGQKSAEEVVEALQRRLGITLPQERSSKHS</sequence>
<gene>
    <name evidence="1" type="primary">rpoA</name>
    <name type="ordered locus">Ava_0715</name>
</gene>
<feature type="chain" id="PRO_0000264479" description="DNA-directed RNA polymerase subunit alpha">
    <location>
        <begin position="1"/>
        <end position="315"/>
    </location>
</feature>
<feature type="region of interest" description="Alpha N-terminal domain (alpha-NTD)" evidence="1">
    <location>
        <begin position="1"/>
        <end position="228"/>
    </location>
</feature>
<feature type="region of interest" description="Alpha C-terminal domain (alpha-CTD)" evidence="1">
    <location>
        <begin position="238"/>
        <end position="315"/>
    </location>
</feature>
<keyword id="KW-0240">DNA-directed RNA polymerase</keyword>
<keyword id="KW-0548">Nucleotidyltransferase</keyword>
<keyword id="KW-0804">Transcription</keyword>
<keyword id="KW-0808">Transferase</keyword>
<reference key="1">
    <citation type="journal article" date="2014" name="Stand. Genomic Sci.">
        <title>Complete genome sequence of Anabaena variabilis ATCC 29413.</title>
        <authorList>
            <person name="Thiel T."/>
            <person name="Pratte B.S."/>
            <person name="Zhong J."/>
            <person name="Goodwin L."/>
            <person name="Copeland A."/>
            <person name="Lucas S."/>
            <person name="Han C."/>
            <person name="Pitluck S."/>
            <person name="Land M.L."/>
            <person name="Kyrpides N.C."/>
            <person name="Woyke T."/>
        </authorList>
    </citation>
    <scope>NUCLEOTIDE SEQUENCE [LARGE SCALE GENOMIC DNA]</scope>
    <source>
        <strain>ATCC 29413 / PCC 7937</strain>
    </source>
</reference>
<dbReference type="EC" id="2.7.7.6" evidence="1"/>
<dbReference type="EMBL" id="CP000117">
    <property type="protein sequence ID" value="ABA20339.1"/>
    <property type="molecule type" value="Genomic_DNA"/>
</dbReference>
<dbReference type="SMR" id="Q3MF97"/>
<dbReference type="STRING" id="240292.Ava_0715"/>
<dbReference type="KEGG" id="ava:Ava_0715"/>
<dbReference type="eggNOG" id="COG0202">
    <property type="taxonomic scope" value="Bacteria"/>
</dbReference>
<dbReference type="HOGENOM" id="CLU_053084_0_1_3"/>
<dbReference type="Proteomes" id="UP000002533">
    <property type="component" value="Chromosome"/>
</dbReference>
<dbReference type="GO" id="GO:0005737">
    <property type="term" value="C:cytoplasm"/>
    <property type="evidence" value="ECO:0007669"/>
    <property type="project" value="UniProtKB-ARBA"/>
</dbReference>
<dbReference type="GO" id="GO:0000428">
    <property type="term" value="C:DNA-directed RNA polymerase complex"/>
    <property type="evidence" value="ECO:0007669"/>
    <property type="project" value="UniProtKB-KW"/>
</dbReference>
<dbReference type="GO" id="GO:0003677">
    <property type="term" value="F:DNA binding"/>
    <property type="evidence" value="ECO:0007669"/>
    <property type="project" value="UniProtKB-UniRule"/>
</dbReference>
<dbReference type="GO" id="GO:0003899">
    <property type="term" value="F:DNA-directed RNA polymerase activity"/>
    <property type="evidence" value="ECO:0007669"/>
    <property type="project" value="UniProtKB-UniRule"/>
</dbReference>
<dbReference type="GO" id="GO:0046983">
    <property type="term" value="F:protein dimerization activity"/>
    <property type="evidence" value="ECO:0007669"/>
    <property type="project" value="InterPro"/>
</dbReference>
<dbReference type="GO" id="GO:0006351">
    <property type="term" value="P:DNA-templated transcription"/>
    <property type="evidence" value="ECO:0007669"/>
    <property type="project" value="UniProtKB-UniRule"/>
</dbReference>
<dbReference type="CDD" id="cd06928">
    <property type="entry name" value="RNAP_alpha_NTD"/>
    <property type="match status" value="1"/>
</dbReference>
<dbReference type="FunFam" id="1.10.150.20:FF:000120">
    <property type="entry name" value="DNA-directed RNA polymerase subunit alpha"/>
    <property type="match status" value="1"/>
</dbReference>
<dbReference type="FunFam" id="2.170.120.12:FF:000001">
    <property type="entry name" value="DNA-directed RNA polymerase subunit alpha"/>
    <property type="match status" value="1"/>
</dbReference>
<dbReference type="Gene3D" id="1.10.150.20">
    <property type="entry name" value="5' to 3' exonuclease, C-terminal subdomain"/>
    <property type="match status" value="1"/>
</dbReference>
<dbReference type="Gene3D" id="2.170.120.12">
    <property type="entry name" value="DNA-directed RNA polymerase, insert domain"/>
    <property type="match status" value="1"/>
</dbReference>
<dbReference type="Gene3D" id="3.30.1360.10">
    <property type="entry name" value="RNA polymerase, RBP11-like subunit"/>
    <property type="match status" value="1"/>
</dbReference>
<dbReference type="HAMAP" id="MF_00059">
    <property type="entry name" value="RNApol_bact_RpoA"/>
    <property type="match status" value="1"/>
</dbReference>
<dbReference type="InterPro" id="IPR011262">
    <property type="entry name" value="DNA-dir_RNA_pol_insert"/>
</dbReference>
<dbReference type="InterPro" id="IPR011263">
    <property type="entry name" value="DNA-dir_RNA_pol_RpoA/D/Rpb3"/>
</dbReference>
<dbReference type="InterPro" id="IPR011773">
    <property type="entry name" value="DNA-dir_RpoA"/>
</dbReference>
<dbReference type="InterPro" id="IPR036603">
    <property type="entry name" value="RBP11-like"/>
</dbReference>
<dbReference type="InterPro" id="IPR011260">
    <property type="entry name" value="RNAP_asu_C"/>
</dbReference>
<dbReference type="InterPro" id="IPR036643">
    <property type="entry name" value="RNApol_insert_sf"/>
</dbReference>
<dbReference type="NCBIfam" id="NF003516">
    <property type="entry name" value="PRK05182.2-2"/>
    <property type="match status" value="1"/>
</dbReference>
<dbReference type="NCBIfam" id="NF003519">
    <property type="entry name" value="PRK05182.2-5"/>
    <property type="match status" value="1"/>
</dbReference>
<dbReference type="NCBIfam" id="TIGR02027">
    <property type="entry name" value="rpoA"/>
    <property type="match status" value="1"/>
</dbReference>
<dbReference type="Pfam" id="PF01000">
    <property type="entry name" value="RNA_pol_A_bac"/>
    <property type="match status" value="1"/>
</dbReference>
<dbReference type="Pfam" id="PF03118">
    <property type="entry name" value="RNA_pol_A_CTD"/>
    <property type="match status" value="1"/>
</dbReference>
<dbReference type="Pfam" id="PF01193">
    <property type="entry name" value="RNA_pol_L"/>
    <property type="match status" value="1"/>
</dbReference>
<dbReference type="SMART" id="SM00662">
    <property type="entry name" value="RPOLD"/>
    <property type="match status" value="1"/>
</dbReference>
<dbReference type="SUPFAM" id="SSF47789">
    <property type="entry name" value="C-terminal domain of RNA polymerase alpha subunit"/>
    <property type="match status" value="1"/>
</dbReference>
<dbReference type="SUPFAM" id="SSF56553">
    <property type="entry name" value="Insert subdomain of RNA polymerase alpha subunit"/>
    <property type="match status" value="1"/>
</dbReference>
<dbReference type="SUPFAM" id="SSF55257">
    <property type="entry name" value="RBP11-like subunits of RNA polymerase"/>
    <property type="match status" value="1"/>
</dbReference>
<comment type="function">
    <text evidence="1">DNA-dependent RNA polymerase catalyzes the transcription of DNA into RNA using the four ribonucleoside triphosphates as substrates.</text>
</comment>
<comment type="catalytic activity">
    <reaction evidence="1">
        <text>RNA(n) + a ribonucleoside 5'-triphosphate = RNA(n+1) + diphosphate</text>
        <dbReference type="Rhea" id="RHEA:21248"/>
        <dbReference type="Rhea" id="RHEA-COMP:14527"/>
        <dbReference type="Rhea" id="RHEA-COMP:17342"/>
        <dbReference type="ChEBI" id="CHEBI:33019"/>
        <dbReference type="ChEBI" id="CHEBI:61557"/>
        <dbReference type="ChEBI" id="CHEBI:140395"/>
        <dbReference type="EC" id="2.7.7.6"/>
    </reaction>
</comment>
<comment type="subunit">
    <text evidence="1">In cyanobacteria the RNAP catalytic core is composed of 2 alpha, 1 beta, 1 beta', 1 gamma and 1 omega subunit. When a sigma factor is associated with the core the holoenzyme is formed, which can initiate transcription.</text>
</comment>
<comment type="domain">
    <text evidence="1">The N-terminal domain is essential for RNAP assembly and basal transcription, whereas the C-terminal domain is involved in interaction with transcriptional regulators and with upstream promoter elements.</text>
</comment>
<comment type="similarity">
    <text evidence="1">Belongs to the RNA polymerase alpha chain family.</text>
</comment>
<protein>
    <recommendedName>
        <fullName evidence="1">DNA-directed RNA polymerase subunit alpha</fullName>
        <shortName evidence="1">RNAP subunit alpha</shortName>
        <ecNumber evidence="1">2.7.7.6</ecNumber>
    </recommendedName>
    <alternativeName>
        <fullName evidence="1">RNA polymerase subunit alpha</fullName>
    </alternativeName>
    <alternativeName>
        <fullName evidence="1">Transcriptase subunit alpha</fullName>
    </alternativeName>
</protein>
<proteinExistence type="inferred from homology"/>
<organism>
    <name type="scientific">Trichormus variabilis (strain ATCC 29413 / PCC 7937)</name>
    <name type="common">Anabaena variabilis</name>
    <dbReference type="NCBI Taxonomy" id="240292"/>
    <lineage>
        <taxon>Bacteria</taxon>
        <taxon>Bacillati</taxon>
        <taxon>Cyanobacteriota</taxon>
        <taxon>Cyanophyceae</taxon>
        <taxon>Nostocales</taxon>
        <taxon>Nostocaceae</taxon>
        <taxon>Trichormus</taxon>
    </lineage>
</organism>
<evidence type="ECO:0000255" key="1">
    <source>
        <dbReference type="HAMAP-Rule" id="MF_00059"/>
    </source>
</evidence>
<accession>Q3MF97</accession>
<name>RPOA_TRIV2</name>